<accession>Q15743</accession>
<accession>Q13334</accession>
<accession>Q4VBB4</accession>
<accession>Q6IX34</accession>
<keyword id="KW-0002">3D-structure</keyword>
<keyword id="KW-0986">Amelogenesis imperfecta</keyword>
<keyword id="KW-1003">Cell membrane</keyword>
<keyword id="KW-0225">Disease variant</keyword>
<keyword id="KW-1015">Disulfide bond</keyword>
<keyword id="KW-0297">G-protein coupled receptor</keyword>
<keyword id="KW-0325">Glycoprotein</keyword>
<keyword id="KW-0472">Membrane</keyword>
<keyword id="KW-1267">Proteomics identification</keyword>
<keyword id="KW-0675">Receptor</keyword>
<keyword id="KW-1185">Reference proteome</keyword>
<keyword id="KW-0807">Transducer</keyword>
<keyword id="KW-0812">Transmembrane</keyword>
<keyword id="KW-1133">Transmembrane helix</keyword>
<keyword id="KW-0043">Tumor suppressor</keyword>
<name>GPR68_HUMAN</name>
<evidence type="ECO:0000250" key="1">
    <source>
        <dbReference type="UniProtKB" id="Q8BFQ3"/>
    </source>
</evidence>
<evidence type="ECO:0000255" key="2"/>
<evidence type="ECO:0000255" key="3">
    <source>
        <dbReference type="PROSITE-ProRule" id="PRU00521"/>
    </source>
</evidence>
<evidence type="ECO:0000256" key="4">
    <source>
        <dbReference type="SAM" id="MobiDB-lite"/>
    </source>
</evidence>
<evidence type="ECO:0000269" key="5">
    <source>
    </source>
</evidence>
<evidence type="ECO:0000269" key="6">
    <source>
    </source>
</evidence>
<evidence type="ECO:0000269" key="7">
    <source>
    </source>
</evidence>
<evidence type="ECO:0000269" key="8">
    <source>
    </source>
</evidence>
<evidence type="ECO:0000269" key="9">
    <source>
    </source>
</evidence>
<evidence type="ECO:0000269" key="10">
    <source>
    </source>
</evidence>
<evidence type="ECO:0000269" key="11">
    <source>
    </source>
</evidence>
<evidence type="ECO:0000269" key="12">
    <source>
    </source>
</evidence>
<evidence type="ECO:0000269" key="13">
    <source>
    </source>
</evidence>
<evidence type="ECO:0000269" key="14">
    <source>
    </source>
</evidence>
<evidence type="ECO:0000269" key="15">
    <source>
    </source>
</evidence>
<evidence type="ECO:0000269" key="16">
    <source>
    </source>
</evidence>
<evidence type="ECO:0000269" key="17">
    <source>
    </source>
</evidence>
<evidence type="ECO:0000269" key="18">
    <source>
    </source>
</evidence>
<evidence type="ECO:0000303" key="19">
    <source>
    </source>
</evidence>
<evidence type="ECO:0000303" key="20">
    <source>
    </source>
</evidence>
<evidence type="ECO:0000303" key="21">
    <source>
    </source>
</evidence>
<evidence type="ECO:0000305" key="22"/>
<evidence type="ECO:0000305" key="23">
    <source>
    </source>
</evidence>
<evidence type="ECO:0000305" key="24">
    <source>
    </source>
</evidence>
<evidence type="ECO:0000312" key="25">
    <source>
        <dbReference type="HGNC" id="HGNC:4519"/>
    </source>
</evidence>
<evidence type="ECO:0007744" key="26">
    <source>
        <dbReference type="PDB" id="9BHM"/>
    </source>
</evidence>
<evidence type="ECO:0007744" key="27">
    <source>
        <dbReference type="PDB" id="9BI6"/>
    </source>
</evidence>
<proteinExistence type="evidence at protein level"/>
<comment type="function">
    <text evidence="1 5 9 10 13 14 17">Proton-sensing G-protein coupled receptor activated by extracellular pH, which is required to monitor pH changes and generate adaptive reactions (PubMed:12955148, PubMed:29677517, PubMed:32865988, PubMed:33478938, PubMed:39753132). The receptor is almost silent at pH 7.8 but fully activated at pH 6.8 (PubMed:12955148, PubMed:39753132). Ligand binding causes a conformation change that triggers signaling via guanine nucleotide-binding proteins (G proteins) and modulates the activity of downstream effectors, such as phospholipase C (PubMed:29677517, PubMed:39753132). GPR68 is mainly coupled to G(q) G proteins and mediates production of diacylglycerol (DAG) and inositol 1,4,5-trisphosphate (IP3) (PubMed:29677517, PubMed:39753132). Acts as a key mechanosensor of fluid shear stress and membrane stretch (PubMed:29677517, PubMed:30471999). Expressed in endothelial cells of small-diameter resistance arteries, where it mediates flow-induced dilation in response to shear stress (PubMed:29677517). May represents an osteoblastic pH sensor regulating cell-mediated responses to acidosis in bone (By similarity). Acts as a regulator of calcium-sensing receptor CASR in a seesaw manner: GPR68-mediated signaling inhibits CASR signaling in response to protons, while CASR inhibits GPR68 in presence of extracellular calcium (By similarity).</text>
</comment>
<comment type="activity regulation">
    <text evidence="7 11 13 17 18">Activated by a network of residues that connects an extracellular-facing cavity to Glu-149, a conserved charged residue buried in the transmembrane core of the receptor (PubMed:39753132). Protonation likely drives conformational changes in extracellular loop 2 (ECL2), which stabilizes movement of transmembrane 3 (TM3) and a series of rearrangements that connect the extracellular-facing cavity to Glu-149, a residue only conserved in proton-sensing G-protein coupled receptors (PubMed:39753132). Activated in an allosteric manner by divalent metal ions at the extracellular surface following the order: Cd(2+) &gt; Co(2+) &gt; Ni(2+) &gt; Zn(2+) &gt; Fe(2+) &gt; Ca(2+) &gt; Mg(2+) (PubMed:32865988). Activated by the benzodiazepine drug lorazepam, a non-selective GPR68 positive allosteric modulator (PubMed:26550826). Activated by ogerin (ZINC67740571), a selective GPR68 positive allosteric modulator (PubMed:26550826). Activated by small molecule MS48107, a selective positive allosteric modulator (PubMed:31298539). Inhibited by small molecule ogremorphin, inducing ferroptosis in cancer cells (PubMed:39900965).</text>
</comment>
<comment type="subcellular location">
    <subcellularLocation>
        <location evidence="17">Cell membrane</location>
        <topology evidence="17">Multi-pass membrane protein</topology>
    </subcellularLocation>
</comment>
<comment type="tissue specificity">
    <text evidence="5">Found at low level in a wide range of tissues, but significantly expressed in lung, kidney, bone and nervous system.</text>
</comment>
<comment type="domain">
    <text evidence="5 14 17">A multitude of proton-sensing residues, which include extracellular histidine residues (His-17, His-20, His-84, His-169 and His-269) or triad of buried acidic residues (Asp-67, Glu-149 and Asp-282), contribute to activation of the G-protein coupled receptor activity and pH sensitivity.</text>
</comment>
<comment type="disease" evidence="8 12 15 16">
    <disease id="DI-04871">
        <name>Amelogenesis imperfecta, hypomaturation type, 2A6</name>
        <acronym>AI2A6</acronym>
        <description>A defect of enamel formation. The disorder involves both primary and secondary dentitions. The teeth have a shiny agar jelly appearance and the enamel is softer than normal. Brown pigment is present in middle layers of enamel.</description>
        <dbReference type="MIM" id="617217"/>
    </disease>
    <text>The disease is caused by variants affecting the gene represented in this entry.</text>
</comment>
<comment type="similarity">
    <text evidence="3">Belongs to the G-protein coupled receptor 1 family.</text>
</comment>
<comment type="caution">
    <text evidence="23 24">Was originally thought to be a receptor for sphingosylphosphorylcholine (SPC) (PubMed:10806476). However, this work has been retracted (PubMed:16508674).</text>
</comment>
<comment type="sequence caution" evidence="22">
    <conflict type="erroneous initiation">
        <sequence resource="EMBL-CDS" id="AAH96071"/>
    </conflict>
</comment>
<comment type="sequence caution" evidence="22">
    <conflict type="erroneous initiation">
        <sequence resource="EMBL-CDS" id="AAH96072"/>
    </conflict>
</comment>
<comment type="sequence caution" evidence="22">
    <conflict type="erroneous initiation">
        <sequence resource="EMBL-CDS" id="AAH96073"/>
    </conflict>
</comment>
<comment type="sequence caution" evidence="22">
    <conflict type="erroneous initiation">
        <sequence resource="EMBL-CDS" id="AAH96074"/>
    </conflict>
</comment>
<comment type="sequence caution" evidence="22">
    <conflict type="erroneous initiation">
        <sequence resource="EMBL-CDS" id="AAH98567"/>
    </conflict>
</comment>
<comment type="sequence caution" evidence="22">
    <conflict type="erroneous initiation">
        <sequence resource="EMBL-CDS" id="AAT38917"/>
    </conflict>
</comment>
<comment type="sequence caution" evidence="22">
    <conflict type="erroneous initiation">
        <sequence resource="EMBL-CDS" id="ACG60649"/>
    </conflict>
</comment>
<comment type="sequence caution" evidence="22">
    <conflict type="erroneous initiation">
        <sequence resource="EMBL-CDS" id="EAW81447"/>
    </conflict>
</comment>
<comment type="online information" name="Atlas of Genetics and Cytogenetics in Oncology and Haematology">
    <link uri="https://atlasgeneticsoncology.org/gene/40745/GPR68"/>
</comment>
<dbReference type="EMBL" id="U35398">
    <property type="protein sequence ID" value="AAA79060.1"/>
    <property type="molecule type" value="mRNA"/>
</dbReference>
<dbReference type="EMBL" id="U48405">
    <property type="protein sequence ID" value="AAC50596.1"/>
    <property type="molecule type" value="Genomic_DNA"/>
</dbReference>
<dbReference type="EMBL" id="EU883575">
    <property type="protein sequence ID" value="ACG60649.1"/>
    <property type="status" value="ALT_INIT"/>
    <property type="molecule type" value="mRNA"/>
</dbReference>
<dbReference type="EMBL" id="AY615372">
    <property type="protein sequence ID" value="AAT38917.1"/>
    <property type="status" value="ALT_INIT"/>
    <property type="molecule type" value="mRNA"/>
</dbReference>
<dbReference type="EMBL" id="AL135818">
    <property type="status" value="NOT_ANNOTATED_CDS"/>
    <property type="molecule type" value="Genomic_DNA"/>
</dbReference>
<dbReference type="EMBL" id="CH471061">
    <property type="protein sequence ID" value="EAW81447.1"/>
    <property type="status" value="ALT_INIT"/>
    <property type="molecule type" value="Genomic_DNA"/>
</dbReference>
<dbReference type="EMBL" id="BC067472">
    <property type="protein sequence ID" value="AAH67472.1"/>
    <property type="molecule type" value="mRNA"/>
</dbReference>
<dbReference type="EMBL" id="BC069592">
    <property type="protein sequence ID" value="AAH69592.1"/>
    <property type="molecule type" value="mRNA"/>
</dbReference>
<dbReference type="EMBL" id="BC096071">
    <property type="protein sequence ID" value="AAH96071.1"/>
    <property type="status" value="ALT_INIT"/>
    <property type="molecule type" value="mRNA"/>
</dbReference>
<dbReference type="EMBL" id="BC096072">
    <property type="protein sequence ID" value="AAH96072.1"/>
    <property type="status" value="ALT_INIT"/>
    <property type="molecule type" value="mRNA"/>
</dbReference>
<dbReference type="EMBL" id="BC096073">
    <property type="protein sequence ID" value="AAH96073.1"/>
    <property type="status" value="ALT_INIT"/>
    <property type="molecule type" value="mRNA"/>
</dbReference>
<dbReference type="EMBL" id="BC096074">
    <property type="protein sequence ID" value="AAH96074.1"/>
    <property type="status" value="ALT_INIT"/>
    <property type="molecule type" value="mRNA"/>
</dbReference>
<dbReference type="EMBL" id="BC098567">
    <property type="protein sequence ID" value="AAH98567.1"/>
    <property type="status" value="ALT_INIT"/>
    <property type="molecule type" value="mRNA"/>
</dbReference>
<dbReference type="CCDS" id="CCDS9894.2"/>
<dbReference type="PIR" id="S68208">
    <property type="entry name" value="S68208"/>
</dbReference>
<dbReference type="RefSeq" id="NP_001171147.1">
    <property type="nucleotide sequence ID" value="NM_001177676.2"/>
</dbReference>
<dbReference type="RefSeq" id="NP_001335366.1">
    <property type="nucleotide sequence ID" value="NM_001348437.1"/>
</dbReference>
<dbReference type="RefSeq" id="NP_003476.3">
    <property type="nucleotide sequence ID" value="NM_003485.3"/>
</dbReference>
<dbReference type="RefSeq" id="XP_005268167.1">
    <property type="nucleotide sequence ID" value="XM_005268110.4"/>
</dbReference>
<dbReference type="RefSeq" id="XP_005268168.1">
    <property type="nucleotide sequence ID" value="XM_005268111.3"/>
</dbReference>
<dbReference type="RefSeq" id="XP_005268169.1">
    <property type="nucleotide sequence ID" value="XM_005268112.3"/>
</dbReference>
<dbReference type="RefSeq" id="XP_006720325.1">
    <property type="nucleotide sequence ID" value="XM_006720262.3"/>
</dbReference>
<dbReference type="RefSeq" id="XP_011535498.1">
    <property type="nucleotide sequence ID" value="XM_011537196.2"/>
</dbReference>
<dbReference type="RefSeq" id="XP_011535499.1">
    <property type="nucleotide sequence ID" value="XM_011537197.2"/>
</dbReference>
<dbReference type="RefSeq" id="XP_011535500.1">
    <property type="nucleotide sequence ID" value="XM_011537198.2"/>
</dbReference>
<dbReference type="RefSeq" id="XP_011535501.1">
    <property type="nucleotide sequence ID" value="XM_011537199.2"/>
</dbReference>
<dbReference type="PDB" id="9BHM">
    <property type="method" value="EM"/>
    <property type="resolution" value="2.90 A"/>
    <property type="chains" value="R=1-365"/>
</dbReference>
<dbReference type="PDB" id="9BI6">
    <property type="method" value="EM"/>
    <property type="resolution" value="2.90 A"/>
    <property type="chains" value="R=1-365"/>
</dbReference>
<dbReference type="PDBsum" id="9BHM"/>
<dbReference type="PDBsum" id="9BI6"/>
<dbReference type="EMDB" id="EMD-44550"/>
<dbReference type="EMDB" id="EMD-44560"/>
<dbReference type="SMR" id="Q15743"/>
<dbReference type="CORUM" id="Q15743"/>
<dbReference type="FunCoup" id="Q15743">
    <property type="interactions" value="842"/>
</dbReference>
<dbReference type="STRING" id="9606.ENSP00000498702"/>
<dbReference type="BindingDB" id="Q15743"/>
<dbReference type="ChEMBL" id="CHEMBL3713916"/>
<dbReference type="GuidetoPHARMACOLOGY" id="114"/>
<dbReference type="TCDB" id="9.A.14.13.49">
    <property type="family name" value="the g-protein-coupled receptor (gpcr) family"/>
</dbReference>
<dbReference type="GlyCosmos" id="Q15743">
    <property type="glycosylation" value="2 sites, No reported glycans"/>
</dbReference>
<dbReference type="GlyGen" id="Q15743">
    <property type="glycosylation" value="2 sites"/>
</dbReference>
<dbReference type="iPTMnet" id="Q15743"/>
<dbReference type="PhosphoSitePlus" id="Q15743"/>
<dbReference type="SwissPalm" id="Q15743"/>
<dbReference type="BioMuta" id="GPR68"/>
<dbReference type="DMDM" id="3024266"/>
<dbReference type="MassIVE" id="Q15743"/>
<dbReference type="PaxDb" id="9606-ENSP00000434045"/>
<dbReference type="PeptideAtlas" id="Q15743"/>
<dbReference type="ProteomicsDB" id="60731"/>
<dbReference type="ABCD" id="Q15743">
    <property type="antibodies" value="3 sequenced antibodies"/>
</dbReference>
<dbReference type="Antibodypedia" id="13584">
    <property type="antibodies" value="293 antibodies from 30 providers"/>
</dbReference>
<dbReference type="DNASU" id="8111"/>
<dbReference type="Ensembl" id="ENST00000531499.2">
    <property type="protein sequence ID" value="ENSP00000434045.2"/>
    <property type="gene ID" value="ENSG00000119714.11"/>
</dbReference>
<dbReference type="Ensembl" id="ENST00000535815.5">
    <property type="protein sequence ID" value="ENSP00000440797.1"/>
    <property type="gene ID" value="ENSG00000119714.11"/>
</dbReference>
<dbReference type="Ensembl" id="ENST00000650645.1">
    <property type="protein sequence ID" value="ENSP00000498702.1"/>
    <property type="gene ID" value="ENSG00000119714.11"/>
</dbReference>
<dbReference type="GeneID" id="8111"/>
<dbReference type="KEGG" id="hsa:8111"/>
<dbReference type="MANE-Select" id="ENST00000650645.1">
    <property type="protein sequence ID" value="ENSP00000498702.1"/>
    <property type="RefSeq nucleotide sequence ID" value="NM_001177676.2"/>
    <property type="RefSeq protein sequence ID" value="NP_001171147.1"/>
</dbReference>
<dbReference type="UCSC" id="uc001xzg.4">
    <property type="organism name" value="human"/>
</dbReference>
<dbReference type="AGR" id="HGNC:4519"/>
<dbReference type="CTD" id="8111"/>
<dbReference type="DisGeNET" id="8111"/>
<dbReference type="GeneCards" id="GPR68"/>
<dbReference type="HGNC" id="HGNC:4519">
    <property type="gene designation" value="GPR68"/>
</dbReference>
<dbReference type="HPA" id="ENSG00000119714">
    <property type="expression patterns" value="Tissue enhanced (pituitary)"/>
</dbReference>
<dbReference type="MalaCards" id="GPR68"/>
<dbReference type="MIM" id="601404">
    <property type="type" value="gene"/>
</dbReference>
<dbReference type="MIM" id="617217">
    <property type="type" value="phenotype"/>
</dbReference>
<dbReference type="neXtProt" id="NX_Q15743"/>
<dbReference type="OpenTargets" id="ENSG00000119714"/>
<dbReference type="Orphanet" id="100033">
    <property type="disease" value="Hypomaturation amelogenesis imperfecta"/>
</dbReference>
<dbReference type="PharmGKB" id="PA28911"/>
<dbReference type="VEuPathDB" id="HostDB:ENSG00000119714"/>
<dbReference type="eggNOG" id="ENOG502QQJA">
    <property type="taxonomic scope" value="Eukaryota"/>
</dbReference>
<dbReference type="GeneTree" id="ENSGT00950000183136"/>
<dbReference type="InParanoid" id="Q15743"/>
<dbReference type="OMA" id="TCCFVFT"/>
<dbReference type="OrthoDB" id="6435638at2759"/>
<dbReference type="PAN-GO" id="Q15743">
    <property type="GO annotations" value="1 GO annotation based on evolutionary models"/>
</dbReference>
<dbReference type="PhylomeDB" id="Q15743"/>
<dbReference type="TreeFam" id="TF331803"/>
<dbReference type="PathwayCommons" id="Q15743"/>
<dbReference type="Reactome" id="R-HSA-373076">
    <property type="pathway name" value="Class A/1 (Rhodopsin-like receptors)"/>
</dbReference>
<dbReference type="Reactome" id="R-HSA-416476">
    <property type="pathway name" value="G alpha (q) signalling events"/>
</dbReference>
<dbReference type="BioGRID-ORCS" id="8111">
    <property type="hits" value="16 hits in 1153 CRISPR screens"/>
</dbReference>
<dbReference type="ChiTaRS" id="GPR68">
    <property type="organism name" value="human"/>
</dbReference>
<dbReference type="GeneWiki" id="GPR68"/>
<dbReference type="GenomeRNAi" id="8111"/>
<dbReference type="Pharos" id="Q15743">
    <property type="development level" value="Tchem"/>
</dbReference>
<dbReference type="PRO" id="PR:Q15743"/>
<dbReference type="Proteomes" id="UP000005640">
    <property type="component" value="Chromosome 14"/>
</dbReference>
<dbReference type="RNAct" id="Q15743">
    <property type="molecule type" value="protein"/>
</dbReference>
<dbReference type="Bgee" id="ENSG00000119714">
    <property type="expression patterns" value="Expressed in tendon of biceps brachii and 148 other cell types or tissues"/>
</dbReference>
<dbReference type="ExpressionAtlas" id="Q15743">
    <property type="expression patterns" value="baseline and differential"/>
</dbReference>
<dbReference type="GO" id="GO:0005886">
    <property type="term" value="C:plasma membrane"/>
    <property type="evidence" value="ECO:0000304"/>
    <property type="project" value="Reactome"/>
</dbReference>
<dbReference type="GO" id="GO:0004930">
    <property type="term" value="F:G protein-coupled receptor activity"/>
    <property type="evidence" value="ECO:0000304"/>
    <property type="project" value="ProtInc"/>
</dbReference>
<dbReference type="GO" id="GO:0071467">
    <property type="term" value="P:cellular response to pH"/>
    <property type="evidence" value="ECO:0000318"/>
    <property type="project" value="GO_Central"/>
</dbReference>
<dbReference type="GO" id="GO:0007186">
    <property type="term" value="P:G protein-coupled receptor signaling pathway"/>
    <property type="evidence" value="ECO:0000304"/>
    <property type="project" value="ProtInc"/>
</dbReference>
<dbReference type="GO" id="GO:0006954">
    <property type="term" value="P:inflammatory response"/>
    <property type="evidence" value="ECO:0000304"/>
    <property type="project" value="ProtInc"/>
</dbReference>
<dbReference type="GO" id="GO:0030073">
    <property type="term" value="P:insulin secretion"/>
    <property type="evidence" value="ECO:0007669"/>
    <property type="project" value="Ensembl"/>
</dbReference>
<dbReference type="GO" id="GO:0030224">
    <property type="term" value="P:monocyte differentiation"/>
    <property type="evidence" value="ECO:0007669"/>
    <property type="project" value="Ensembl"/>
</dbReference>
<dbReference type="GO" id="GO:0045656">
    <property type="term" value="P:negative regulation of monocyte differentiation"/>
    <property type="evidence" value="ECO:0007669"/>
    <property type="project" value="Ensembl"/>
</dbReference>
<dbReference type="GO" id="GO:0036035">
    <property type="term" value="P:osteoclast development"/>
    <property type="evidence" value="ECO:0007669"/>
    <property type="project" value="Ensembl"/>
</dbReference>
<dbReference type="GO" id="GO:0035774">
    <property type="term" value="P:positive regulation of insulin secretion involved in cellular response to glucose stimulus"/>
    <property type="evidence" value="ECO:0007669"/>
    <property type="project" value="Ensembl"/>
</dbReference>
<dbReference type="GO" id="GO:2001206">
    <property type="term" value="P:positive regulation of osteoclast development"/>
    <property type="evidence" value="ECO:0007669"/>
    <property type="project" value="Ensembl"/>
</dbReference>
<dbReference type="CDD" id="cd15367">
    <property type="entry name" value="7tmA_GPR68_OGR1"/>
    <property type="match status" value="1"/>
</dbReference>
<dbReference type="FunFam" id="1.20.1070.10:FF:000065">
    <property type="entry name" value="G-protein coupled receptor 4"/>
    <property type="match status" value="1"/>
</dbReference>
<dbReference type="Gene3D" id="1.20.1070.10">
    <property type="entry name" value="Rhodopsin 7-helix transmembrane proteins"/>
    <property type="match status" value="1"/>
</dbReference>
<dbReference type="InterPro" id="IPR000276">
    <property type="entry name" value="GPCR_Rhodpsn"/>
</dbReference>
<dbReference type="InterPro" id="IPR017452">
    <property type="entry name" value="GPCR_Rhodpsn_7TM"/>
</dbReference>
<dbReference type="InterPro" id="IPR005389">
    <property type="entry name" value="OGR1_rcpt"/>
</dbReference>
<dbReference type="PANTHER" id="PTHR24234">
    <property type="entry name" value="LYSOPHOSPHATIDIC ACID RECEPTOR 5/SPHINGOSYLPHOSPHORYLCHOLINE RECEPTOR"/>
    <property type="match status" value="1"/>
</dbReference>
<dbReference type="PANTHER" id="PTHR24234:SF5">
    <property type="entry name" value="OVARIAN CANCER G-PROTEIN COUPLED RECEPTOR 1"/>
    <property type="match status" value="1"/>
</dbReference>
<dbReference type="Pfam" id="PF00001">
    <property type="entry name" value="7tm_1"/>
    <property type="match status" value="1"/>
</dbReference>
<dbReference type="PRINTS" id="PR00237">
    <property type="entry name" value="GPCRRHODOPSN"/>
</dbReference>
<dbReference type="PRINTS" id="PR01564">
    <property type="entry name" value="OGR1RECEPTOR"/>
</dbReference>
<dbReference type="SUPFAM" id="SSF81321">
    <property type="entry name" value="Family A G protein-coupled receptor-like"/>
    <property type="match status" value="1"/>
</dbReference>
<dbReference type="PROSITE" id="PS00237">
    <property type="entry name" value="G_PROTEIN_RECEP_F1_1"/>
    <property type="match status" value="1"/>
</dbReference>
<dbReference type="PROSITE" id="PS50262">
    <property type="entry name" value="G_PROTEIN_RECEP_F1_2"/>
    <property type="match status" value="1"/>
</dbReference>
<reference key="1">
    <citation type="journal article" date="1995" name="FEBS Lett.">
        <title>Cloning, sequencing and tissue distribution of two related G protein-coupled receptor candidates expressed prominently in human lung tissue.</title>
        <authorList>
            <person name="An S."/>
            <person name="Tsai C."/>
            <person name="Goetzl E.J."/>
        </authorList>
    </citation>
    <scope>NUCLEOTIDE SEQUENCE [MRNA]</scope>
</reference>
<reference key="2">
    <citation type="journal article" date="1996" name="Genomics">
        <title>Identification of human OGR1, a novel G protein-coupled receptor that maps to chromosome 14.</title>
        <authorList>
            <person name="Xu Y."/>
            <person name="Casey G."/>
        </authorList>
    </citation>
    <scope>NUCLEOTIDE SEQUENCE [GENOMIC DNA]</scope>
    <source>
        <tissue>Ovarian carcinoma</tissue>
    </source>
</reference>
<reference key="3">
    <citation type="submission" date="2008-07" db="EMBL/GenBank/DDBJ databases">
        <title>Isolation of cDNA coding for human orphan G protein receptor 68.</title>
        <authorList>
            <person name="Kaighin V.A."/>
            <person name="Martin A.L."/>
            <person name="Aronstam R.S."/>
        </authorList>
    </citation>
    <scope>NUCLEOTIDE SEQUENCE [MRNA]</scope>
    <source>
        <tissue>Brain</tissue>
    </source>
</reference>
<reference key="4">
    <citation type="submission" date="2004-04" db="EMBL/GenBank/DDBJ databases">
        <title>cDNA clones of human proteins involved in signal transduction sequenced by the Guthrie cDNA resource center (www.cdna.org).</title>
        <authorList>
            <person name="King M.M."/>
            <person name="Aronstam R.S."/>
            <person name="Sharma S.V."/>
        </authorList>
    </citation>
    <scope>NUCLEOTIDE SEQUENCE [LARGE SCALE MRNA]</scope>
    <source>
        <tissue>Lung</tissue>
    </source>
</reference>
<reference key="5">
    <citation type="journal article" date="2003" name="Nature">
        <title>The DNA sequence and analysis of human chromosome 14.</title>
        <authorList>
            <person name="Heilig R."/>
            <person name="Eckenberg R."/>
            <person name="Petit J.-L."/>
            <person name="Fonknechten N."/>
            <person name="Da Silva C."/>
            <person name="Cattolico L."/>
            <person name="Levy M."/>
            <person name="Barbe V."/>
            <person name="De Berardinis V."/>
            <person name="Ureta-Vidal A."/>
            <person name="Pelletier E."/>
            <person name="Vico V."/>
            <person name="Anthouard V."/>
            <person name="Rowen L."/>
            <person name="Madan A."/>
            <person name="Qin S."/>
            <person name="Sun H."/>
            <person name="Du H."/>
            <person name="Pepin K."/>
            <person name="Artiguenave F."/>
            <person name="Robert C."/>
            <person name="Cruaud C."/>
            <person name="Bruels T."/>
            <person name="Jaillon O."/>
            <person name="Friedlander L."/>
            <person name="Samson G."/>
            <person name="Brottier P."/>
            <person name="Cure S."/>
            <person name="Segurens B."/>
            <person name="Aniere F."/>
            <person name="Samain S."/>
            <person name="Crespeau H."/>
            <person name="Abbasi N."/>
            <person name="Aiach N."/>
            <person name="Boscus D."/>
            <person name="Dickhoff R."/>
            <person name="Dors M."/>
            <person name="Dubois I."/>
            <person name="Friedman C."/>
            <person name="Gouyvenoux M."/>
            <person name="James R."/>
            <person name="Madan A."/>
            <person name="Mairey-Estrada B."/>
            <person name="Mangenot S."/>
            <person name="Martins N."/>
            <person name="Menard M."/>
            <person name="Oztas S."/>
            <person name="Ratcliffe A."/>
            <person name="Shaffer T."/>
            <person name="Trask B."/>
            <person name="Vacherie B."/>
            <person name="Bellemere C."/>
            <person name="Belser C."/>
            <person name="Besnard-Gonnet M."/>
            <person name="Bartol-Mavel D."/>
            <person name="Boutard M."/>
            <person name="Briez-Silla S."/>
            <person name="Combette S."/>
            <person name="Dufosse-Laurent V."/>
            <person name="Ferron C."/>
            <person name="Lechaplais C."/>
            <person name="Louesse C."/>
            <person name="Muselet D."/>
            <person name="Magdelenat G."/>
            <person name="Pateau E."/>
            <person name="Petit E."/>
            <person name="Sirvain-Trukniewicz P."/>
            <person name="Trybou A."/>
            <person name="Vega-Czarny N."/>
            <person name="Bataille E."/>
            <person name="Bluet E."/>
            <person name="Bordelais I."/>
            <person name="Dubois M."/>
            <person name="Dumont C."/>
            <person name="Guerin T."/>
            <person name="Haffray S."/>
            <person name="Hammadi R."/>
            <person name="Muanga J."/>
            <person name="Pellouin V."/>
            <person name="Robert D."/>
            <person name="Wunderle E."/>
            <person name="Gauguet G."/>
            <person name="Roy A."/>
            <person name="Sainte-Marthe L."/>
            <person name="Verdier J."/>
            <person name="Verdier-Discala C."/>
            <person name="Hillier L.W."/>
            <person name="Fulton L."/>
            <person name="McPherson J."/>
            <person name="Matsuda F."/>
            <person name="Wilson R."/>
            <person name="Scarpelli C."/>
            <person name="Gyapay G."/>
            <person name="Wincker P."/>
            <person name="Saurin W."/>
            <person name="Quetier F."/>
            <person name="Waterston R."/>
            <person name="Hood L."/>
            <person name="Weissenbach J."/>
        </authorList>
    </citation>
    <scope>NUCLEOTIDE SEQUENCE [LARGE SCALE GENOMIC DNA]</scope>
</reference>
<reference key="6">
    <citation type="submission" date="2005-07" db="EMBL/GenBank/DDBJ databases">
        <authorList>
            <person name="Mural R.J."/>
            <person name="Istrail S."/>
            <person name="Sutton G.G."/>
            <person name="Florea L."/>
            <person name="Halpern A.L."/>
            <person name="Mobarry C.M."/>
            <person name="Lippert R."/>
            <person name="Walenz B."/>
            <person name="Shatkay H."/>
            <person name="Dew I."/>
            <person name="Miller J.R."/>
            <person name="Flanigan M.J."/>
            <person name="Edwards N.J."/>
            <person name="Bolanos R."/>
            <person name="Fasulo D."/>
            <person name="Halldorsson B.V."/>
            <person name="Hannenhalli S."/>
            <person name="Turner R."/>
            <person name="Yooseph S."/>
            <person name="Lu F."/>
            <person name="Nusskern D.R."/>
            <person name="Shue B.C."/>
            <person name="Zheng X.H."/>
            <person name="Zhong F."/>
            <person name="Delcher A.L."/>
            <person name="Huson D.H."/>
            <person name="Kravitz S.A."/>
            <person name="Mouchard L."/>
            <person name="Reinert K."/>
            <person name="Remington K.A."/>
            <person name="Clark A.G."/>
            <person name="Waterman M.S."/>
            <person name="Eichler E.E."/>
            <person name="Adams M.D."/>
            <person name="Hunkapiller M.W."/>
            <person name="Myers E.W."/>
            <person name="Venter J.C."/>
        </authorList>
    </citation>
    <scope>NUCLEOTIDE SEQUENCE [LARGE SCALE GENOMIC DNA]</scope>
</reference>
<reference key="7">
    <citation type="journal article" date="2004" name="Genome Res.">
        <title>The status, quality, and expansion of the NIH full-length cDNA project: the Mammalian Gene Collection (MGC).</title>
        <authorList>
            <consortium name="The MGC Project Team"/>
        </authorList>
    </citation>
    <scope>NUCLEOTIDE SEQUENCE [LARGE SCALE MRNA]</scope>
</reference>
<reference key="8">
    <citation type="journal article" date="2000" name="Nat. Cell Biol.">
        <title>Sphingosylphosphorylcholine is a ligand for ovarian cancer G-protein-coupled receptor 1.</title>
        <authorList>
            <person name="Xu Y."/>
            <person name="Zhu K."/>
            <person name="Hong G."/>
            <person name="Wu W."/>
            <person name="Baudhuin L.M."/>
            <person name="Xiao Y.-J."/>
            <person name="Damron D.S."/>
        </authorList>
    </citation>
    <scope>RETRACTED PAPER</scope>
</reference>
<reference key="9">
    <citation type="journal article" date="2006" name="Nat. Cell Biol.">
        <authorList>
            <person name="Xu Y."/>
            <person name="Zhu K."/>
            <person name="Hong G."/>
            <person name="Wu W."/>
            <person name="Baudhuin L.M."/>
            <person name="Xiao Y.-J."/>
            <person name="Damron D.S."/>
        </authorList>
    </citation>
    <scope>ERRATUM OF PUBMED:10806476</scope>
    <scope>RETRACTION NOTICE OF PUBMED:10806476</scope>
</reference>
<reference key="10">
    <citation type="journal article" date="2003" name="Nature">
        <title>Proton-sensing G-protein-coupled receptors.</title>
        <authorList>
            <person name="Ludwig M.-G."/>
            <person name="Vanek M."/>
            <person name="Guerini D."/>
            <person name="Gasser J.A."/>
            <person name="Jones C.E."/>
            <person name="Junker U."/>
            <person name="Hofstetter H."/>
            <person name="Wolf R.M."/>
            <person name="Seuwen K."/>
        </authorList>
    </citation>
    <scope>FUNCTION</scope>
    <scope>TISSUE SPECIFICITY</scope>
    <scope>MUTAGENESIS OF HIS-17; HIS-20; HIS-84; HIS-89; HIS-159; HIS-169; HIS-175; HIS-245 AND HIS-269</scope>
</reference>
<reference key="11">
    <citation type="journal article" date="2015" name="Nature">
        <title>Allosteric ligands for the pharmacologically dark receptors GPR68 and GPR65.</title>
        <authorList>
            <person name="Huang X.P."/>
            <person name="Karpiak J."/>
            <person name="Kroeze W.K."/>
            <person name="Zhu H."/>
            <person name="Chen X."/>
            <person name="Moy S.S."/>
            <person name="Saddoris K.A."/>
            <person name="Nikolova V.D."/>
            <person name="Farrell M.S."/>
            <person name="Wang S."/>
            <person name="Mangano T.J."/>
            <person name="Deshpande D.A."/>
            <person name="Jiang A."/>
            <person name="Penn R.B."/>
            <person name="Jin J."/>
            <person name="Koller B.H."/>
            <person name="Kenakin T."/>
            <person name="Shoichet B.K."/>
            <person name="Roth B.L."/>
        </authorList>
    </citation>
    <scope>ACTIVITY REGULATION</scope>
</reference>
<reference key="12">
    <citation type="journal article" date="2016" name="Am. J. Hum. Genet.">
        <title>Mutations in the pH-sensing G-protein-coupled receptor GPR68 cause amelogenesis imperfecta.</title>
        <authorList>
            <person name="Parry D.A."/>
            <person name="Smith C.E."/>
            <person name="El-Sayed W."/>
            <person name="Poulter J.A."/>
            <person name="Shore R.C."/>
            <person name="Logan C.V."/>
            <person name="Mogi C."/>
            <person name="Sato K."/>
            <person name="Okajima F."/>
            <person name="Harada A."/>
            <person name="Zhang H."/>
            <person name="Koruyucu M."/>
            <person name="Seymen F."/>
            <person name="Hu J.C."/>
            <person name="Simmer J.P."/>
            <person name="Ahmed M."/>
            <person name="Jafri H."/>
            <person name="Johnson C.A."/>
            <person name="Inglehearn C.F."/>
            <person name="Mighell A.J."/>
        </authorList>
    </citation>
    <scope>INVOLVEMENT IN AI2A6</scope>
    <scope>VARIANT AI2A6 PRO-74</scope>
</reference>
<reference key="13">
    <citation type="journal article" date="2018" name="Cell">
        <title>GPR68 Senses flow and is essential for vascular physiology.</title>
        <authorList>
            <person name="Xu J."/>
            <person name="Mathur J."/>
            <person name="Vessieres E."/>
            <person name="Hammack S."/>
            <person name="Nonomura K."/>
            <person name="Favre J."/>
            <person name="Grimaud L."/>
            <person name="Petrus M."/>
            <person name="Francisco A."/>
            <person name="Li J."/>
            <person name="Lee V."/>
            <person name="Xiang F.L."/>
            <person name="Mainquist J.K."/>
            <person name="Cahalan S.M."/>
            <person name="Orth A.P."/>
            <person name="Walker J.R."/>
            <person name="Ma S."/>
            <person name="Lukacs V."/>
            <person name="Bordone L."/>
            <person name="Bandell M."/>
            <person name="Laffitte B."/>
            <person name="Xu Y."/>
            <person name="Chien S."/>
            <person name="Henrion D."/>
            <person name="Patapoutian A."/>
        </authorList>
    </citation>
    <scope>FUNCTION</scope>
    <scope>MUTAGENESIS OF HIS-17; HIS-20; HIS-84 AND HIS-169</scope>
</reference>
<reference key="14">
    <citation type="journal article" date="2018" name="Curr. Biol.">
        <title>Coincidence Detection of Membrane Stretch and Extracellular pH by the Proton-Sensing Receptor OGR1 (GPR68).</title>
        <authorList>
            <person name="Wei W.C."/>
            <person name="Bianchi F."/>
            <person name="Wang Y.K."/>
            <person name="Tang M.J."/>
            <person name="Ye H."/>
            <person name="Glitsch M.D."/>
        </authorList>
    </citation>
    <scope>FUNCTION</scope>
</reference>
<reference key="15">
    <citation type="journal article" date="2019" name="J. Med. Chem.">
        <title>Design, synthesis, and characterization of ogerin-based positive allosteric modulators for G Protein-Coupled Receptor 68 (GPR68).</title>
        <authorList>
            <person name="Yu X."/>
            <person name="Huang X.P."/>
            <person name="Kenakin T.P."/>
            <person name="Slocum S.T."/>
            <person name="Chen X."/>
            <person name="Martini M.L."/>
            <person name="Liu J."/>
            <person name="Jin J."/>
        </authorList>
    </citation>
    <scope>ACTIVITY REGULATION</scope>
</reference>
<reference key="16">
    <citation type="journal article" date="2020" name="Biochemistry">
        <title>Differential roles of extracellular histidine residues of GPR68 for proton-sensing and allosteric modulation by divalent metal ions.</title>
        <authorList>
            <person name="Huang X.P."/>
            <person name="Kenakin T.P."/>
            <person name="Gu S."/>
            <person name="Shoichet B.K."/>
            <person name="Roth B.L."/>
        </authorList>
    </citation>
    <scope>FUNCTION</scope>
    <scope>ACTIVITY REGULATION</scope>
    <scope>MUTAGENESIS OF HIS-17; HIS-20; HIS-84; HIS-169; HIS-245 AND HIS-269</scope>
</reference>
<reference key="17">
    <citation type="journal article" date="2021" name="J. Pers. Med.">
        <title>Novel mutations in GPR68 and SLC24A4 cause hypomaturation amelogenesis imperfecta.</title>
        <authorList>
            <person name="Seymen F."/>
            <person name="Zhang H."/>
            <person name="Kasimoglu Y."/>
            <person name="Koruyucu M."/>
            <person name="Simmer J.P."/>
            <person name="Hu J.C."/>
            <person name="Kim J.W."/>
        </authorList>
    </citation>
    <scope>INVOLVEMENT IN AI2A6</scope>
</reference>
<reference key="18">
    <citation type="journal article" date="2021" name="J. Biol. Chem.">
        <title>The evolution and mechanism of GPCR proton sensing.</title>
        <authorList>
            <person name="Rowe J.B."/>
            <person name="Kapolka N.J."/>
            <person name="Taghon G.J."/>
            <person name="Morgan W.M."/>
            <person name="Isom D.G."/>
        </authorList>
    </citation>
    <scope>FUNCTION</scope>
    <scope>DOMAIN</scope>
    <scope>MUTAGENESIS OF ASP-67; GLU-149 AND ASP-282</scope>
</reference>
<reference evidence="26 27" key="19">
    <citation type="journal article" date="2025" name="Cell">
        <title>Molecular basis of proton sensing by G protein-coupled receptors.</title>
        <authorList>
            <person name="Howard M.K."/>
            <person name="Hoppe N."/>
            <person name="Huang X.P."/>
            <person name="Mitrovic D."/>
            <person name="Billesboelle C.B."/>
            <person name="Macdonald C.B."/>
            <person name="Mehrotra E."/>
            <person name="Rockefeller Grimes P."/>
            <person name="Trinidad D.D."/>
            <person name="Delemotte L."/>
            <person name="English J.G."/>
            <person name="Coyote-Maestas W."/>
            <person name="Manglik A."/>
        </authorList>
    </citation>
    <scope>STRUCTURE BY ELECTRON MICROSCOPY (2.9 ANGSTROMS) IN COMPLEX WITH GNAS</scope>
    <scope>DISULFIDE BONDS</scope>
    <scope>FUNCTION</scope>
    <scope>SUBCELLULAR LOCATION</scope>
    <scope>ACTIVITY REGULATION</scope>
    <scope>DOMAIN</scope>
    <scope>MUTAGENESIS OF HIS-20; TYR-102; ASP-118; PHE-127; GLU-149; GLU-174; CYS-240; PHE-241; HIS-269 AND ASP-282</scope>
</reference>
<reference key="20">
    <citation type="journal article" date="2025" name="Sci. Rep.">
        <title>Inhibition of GPR68 induces ferroptosis and radiosensitivity in diverse cancer cell types.</title>
        <authorList>
            <person name="Neitzel L.R."/>
            <person name="Fuller D.T."/>
            <person name="Cornell J."/>
            <person name="Rea S."/>
            <person name="de Aguiar Ferreira C."/>
            <person name="Williams C.H."/>
            <person name="Hong C.C."/>
        </authorList>
    </citation>
    <scope>ACTIVITY REGULATION</scope>
</reference>
<reference key="21">
    <citation type="journal article" date="2011" name="Nature">
        <title>Exome sequencing identifies frequent mutation of the SWI/SNF complex gene PBRM1 in renal carcinoma.</title>
        <authorList>
            <person name="Varela I."/>
            <person name="Tarpey P."/>
            <person name="Raine K."/>
            <person name="Huang D."/>
            <person name="Ong C.K."/>
            <person name="Stephens P."/>
            <person name="Davies H."/>
            <person name="Jones D."/>
            <person name="Lin M.L."/>
            <person name="Teague J."/>
            <person name="Bignell G."/>
            <person name="Butler A."/>
            <person name="Cho J."/>
            <person name="Dalgliesh G.L."/>
            <person name="Galappaththige D."/>
            <person name="Greenman C."/>
            <person name="Hardy C."/>
            <person name="Jia M."/>
            <person name="Latimer C."/>
            <person name="Lau K.W."/>
            <person name="Marshall J."/>
            <person name="McLaren S."/>
            <person name="Menzies A."/>
            <person name="Mudie L."/>
            <person name="Stebbings L."/>
            <person name="Largaespada D.A."/>
            <person name="Wessels L.F.A."/>
            <person name="Richard S."/>
            <person name="Kahnoski R.J."/>
            <person name="Anema J."/>
            <person name="Tuveson D.A."/>
            <person name="Perez-Mancera P.A."/>
            <person name="Mustonen V."/>
            <person name="Fischer A."/>
            <person name="Adams D.J."/>
            <person name="Rust A."/>
            <person name="Chan-On W."/>
            <person name="Subimerb C."/>
            <person name="Dykema K."/>
            <person name="Furge K."/>
            <person name="Campbell P.J."/>
            <person name="Teh B.T."/>
            <person name="Stratton M.R."/>
            <person name="Futreal P.A."/>
        </authorList>
    </citation>
    <scope>VARIANT SER-39</scope>
</reference>
<reference key="22">
    <citation type="journal article" date="2020" name="Biochem. Biophys. Res. Commun.">
        <title>A missense mutation of Leu74Pro of OGR1 found in familial amelogenesis imperfecta actually causes the loss of the pH-sensing mechanism.</title>
        <authorList>
            <person name="Sato K."/>
            <person name="Mogi C."/>
            <person name="Mighell A.J."/>
            <person name="Okajima F."/>
        </authorList>
    </citation>
    <scope>VARIANT AI2A6 PRO-74</scope>
    <scope>CHARACTERIZATION OF VARIANT AI2A6 PRO-74</scope>
</reference>
<reference key="23">
    <citation type="journal article" date="2024" name="Arch. Oral Biol.">
        <title>A novel mutation in GPR68 causes hypomaturation amelogenesis imperfecta.</title>
        <authorList>
            <person name="Yu S."/>
            <person name="Liu D."/>
            <person name="Yan C."/>
            <person name="Yuan C."/>
            <person name="Zhang C."/>
            <person name="Zheng S."/>
        </authorList>
    </citation>
    <scope>VARIANT AI2A6 ASN-50</scope>
</reference>
<feature type="chain" id="PRO_0000070113" description="G-protein coupled receptor 68">
    <location>
        <begin position="1"/>
        <end position="365"/>
    </location>
</feature>
<feature type="topological domain" description="Extracellular" evidence="17 26 27">
    <location>
        <begin position="1"/>
        <end position="12"/>
    </location>
</feature>
<feature type="transmembrane region" description="Helical; Name=1" evidence="17 26 27">
    <location>
        <begin position="13"/>
        <end position="49"/>
    </location>
</feature>
<feature type="topological domain" description="Cytoplasmic" evidence="17 26 27">
    <location>
        <begin position="50"/>
        <end position="53"/>
    </location>
</feature>
<feature type="transmembrane region" description="Helical; Name=2" evidence="17 26 27">
    <location>
        <begin position="54"/>
        <end position="84"/>
    </location>
</feature>
<feature type="topological domain" description="Extracellular" evidence="17 26 27">
    <location>
        <begin position="85"/>
        <end position="89"/>
    </location>
</feature>
<feature type="transmembrane region" description="Helical; Name=3" evidence="17 26 27">
    <location>
        <begin position="90"/>
        <end position="125"/>
    </location>
</feature>
<feature type="topological domain" description="Cytoplasmic" evidence="17 26 27">
    <location>
        <begin position="126"/>
        <end position="133"/>
    </location>
</feature>
<feature type="transmembrane region" description="Helical; Name=4" evidence="17 26 27">
    <location>
        <begin position="134"/>
        <end position="160"/>
    </location>
</feature>
<feature type="topological domain" description="Extracellular" evidence="17 26 27">
    <location>
        <begin position="161"/>
        <end position="176"/>
    </location>
</feature>
<feature type="transmembrane region" description="Helical; Name=5" evidence="17 26 27">
    <location>
        <begin position="177"/>
        <end position="214"/>
    </location>
</feature>
<feature type="topological domain" description="Cytoplasmic" evidence="17 26 27">
    <location>
        <begin position="215"/>
        <end position="218"/>
    </location>
</feature>
<feature type="transmembrane region" description="Helical; Name=6" evidence="17 26 27">
    <location>
        <begin position="219"/>
        <end position="254"/>
    </location>
</feature>
<feature type="topological domain" description="Extracellular" evidence="17 26 27">
    <location>
        <begin position="255"/>
        <end position="260"/>
    </location>
</feature>
<feature type="transmembrane region" description="Helical; Name=7" evidence="17 26 27">
    <location>
        <begin position="261"/>
        <end position="289"/>
    </location>
</feature>
<feature type="topological domain" description="Cytoplasmic" evidence="17 26 27">
    <location>
        <begin position="290"/>
        <end position="365"/>
    </location>
</feature>
<feature type="region of interest" description="Extracellular loop 2 (ECL2)" evidence="17">
    <location>
        <begin position="161"/>
        <end position="176"/>
    </location>
</feature>
<feature type="region of interest" description="Disordered" evidence="4">
    <location>
        <begin position="345"/>
        <end position="365"/>
    </location>
</feature>
<feature type="compositionally biased region" description="Gly residues" evidence="4">
    <location>
        <begin position="355"/>
        <end position="365"/>
    </location>
</feature>
<feature type="site" description="Proton sensing" evidence="5">
    <location>
        <position position="17"/>
    </location>
</feature>
<feature type="site" description="Proton sensing" evidence="5">
    <location>
        <position position="20"/>
    </location>
</feature>
<feature type="site" description="Proton sensing" evidence="5">
    <location>
        <position position="84"/>
    </location>
</feature>
<feature type="site" description="Required for activation" evidence="17">
    <location>
        <position position="149"/>
    </location>
</feature>
<feature type="site" description="Proton sensing" evidence="5">
    <location>
        <position position="169"/>
    </location>
</feature>
<feature type="site" description="Proton sensing" evidence="5">
    <location>
        <position position="269"/>
    </location>
</feature>
<feature type="glycosylation site" description="N-linked (GlcNAc...) asparagine" evidence="2">
    <location>
        <position position="3"/>
    </location>
</feature>
<feature type="glycosylation site" description="N-linked (GlcNAc...) asparagine" evidence="2">
    <location>
        <position position="8"/>
    </location>
</feature>
<feature type="disulfide bond" evidence="17 26 27">
    <location>
        <begin position="13"/>
        <end position="258"/>
    </location>
</feature>
<feature type="disulfide bond" evidence="3 17 26 27">
    <location>
        <begin position="94"/>
        <end position="172"/>
    </location>
</feature>
<feature type="sequence variant" id="VAR_064716" description="Found in a renal cell carcinoma case; somatic mutation." evidence="6">
    <original>N</original>
    <variation>S</variation>
    <location>
        <position position="39"/>
    </location>
</feature>
<feature type="sequence variant" id="VAR_090420" description="In AI2A6; uncertain significance." evidence="16">
    <original>I</original>
    <variation>N</variation>
    <location>
        <position position="50"/>
    </location>
</feature>
<feature type="sequence variant" id="VAR_058714" description="In dbSNP:rs2230339.">
    <original>R</original>
    <variation>Q</variation>
    <location>
        <position position="53"/>
    </location>
</feature>
<feature type="sequence variant" id="VAR_077874" description="In AI2A6; uncertain significance; decreased G-protein coupled receptor signaling; dbSNP:rs1057517672." evidence="8 12">
    <original>L</original>
    <variation>P</variation>
    <location>
        <position position="74"/>
    </location>
</feature>
<feature type="mutagenesis site" description="Decreased but not abolished proton-induced G-protein coupled receptor signaling. Failed to stimulate IP formation at pH 6.8, activity is restored at more acid pH. Abolished response to shear stress." evidence="5 9 13">
    <original>H</original>
    <variation>F</variation>
    <location>
        <position position="17"/>
    </location>
</feature>
<feature type="mutagenesis site" description="Decreased but not abolished proton-induced G-protein coupled receptor signaling. Abolished response to shear stress." evidence="9 13 17">
    <original>H</original>
    <variation>A</variation>
    <location>
        <position position="20"/>
    </location>
</feature>
<feature type="mutagenesis site" description="Failed to stimulate IP formation at pH 6.8, activity is restored at more acid pH." evidence="5">
    <original>H</original>
    <variation>F</variation>
    <location>
        <position position="20"/>
    </location>
</feature>
<feature type="mutagenesis site" description="Impaired ability to sense protons." evidence="14">
    <original>D</original>
    <variation>N</variation>
    <location>
        <position position="67"/>
    </location>
</feature>
<feature type="mutagenesis site" description="Decreased but not abolished proton-induced G-protein coupled receptor signaling. Failed to stimulate IP formation at pH 6.8, activity is restored at more acid pH. Abolished response to shear stress." evidence="5 9 13">
    <original>H</original>
    <variation>F</variation>
    <location>
        <position position="84"/>
    </location>
</feature>
<feature type="mutagenesis site" description="No effect on pH-sensing activity." evidence="5">
    <original>H</original>
    <variation>F</variation>
    <location>
        <position position="89"/>
    </location>
</feature>
<feature type="mutagenesis site" description="Abolished proton-induced G-protein coupled receptor signaling." evidence="17">
    <original>Y</original>
    <variation>A</variation>
    <location>
        <position position="102"/>
    </location>
</feature>
<feature type="mutagenesis site" description="Increased proton-induced G-protein coupled receptor signaling." evidence="17">
    <original>D</original>
    <variation>A</variation>
    <location>
        <position position="118"/>
    </location>
</feature>
<feature type="mutagenesis site" description="Abolished proton-induced G-protein coupled receptor signaling." evidence="17">
    <original>F</original>
    <variation>A</variation>
    <location>
        <position position="127"/>
    </location>
</feature>
<feature type="mutagenesis site" description="Mimics the protonation state; more easily activated by protons." evidence="14 17">
    <original>E</original>
    <variation>Q</variation>
    <location>
        <position position="149"/>
    </location>
</feature>
<feature type="mutagenesis site" description="No effect on pH-sensing activity." evidence="5">
    <original>H</original>
    <variation>F</variation>
    <location>
        <position position="159"/>
    </location>
</feature>
<feature type="mutagenesis site" description="Decreased but not abolished proton-induced G-protein coupled receptor signaling. Failed to stimulate IP formation at pH 6.8, activity is restored at more acid pH. Abolished response to shear stress." evidence="5 9 13">
    <original>H</original>
    <variation>F</variation>
    <location>
        <position position="169"/>
    </location>
</feature>
<feature type="mutagenesis site" description="Abolished proton-induced G-protein coupled receptor signaling." evidence="17">
    <original>E</original>
    <variation>A</variation>
    <location>
        <position position="174"/>
    </location>
</feature>
<feature type="mutagenesis site" description="No effect on pH-sensing activity." evidence="5">
    <original>H</original>
    <variation>F</variation>
    <location>
        <position position="175"/>
    </location>
</feature>
<feature type="mutagenesis site" description="Increased proton-induced G-protein coupled receptor signaling." evidence="17">
    <original>C</original>
    <variation>A</variation>
    <location>
        <position position="240"/>
    </location>
</feature>
<feature type="mutagenesis site" description="Increased proton-induced G-protein coupled receptor signaling." evidence="17">
    <original>F</original>
    <variation>A</variation>
    <location>
        <position position="241"/>
    </location>
</feature>
<feature type="mutagenesis site" description="Decreased but not abolished proton-induced G-protein coupled receptor signaling. Severe loss pH-sensing activity." evidence="5 13">
    <original>H</original>
    <variation>F</variation>
    <location>
        <position position="245"/>
    </location>
</feature>
<feature type="mutagenesis site" description="Abolished proton-induced G-protein coupled receptor signaling." evidence="17">
    <original>H</original>
    <variation>A</variation>
    <location>
        <position position="269"/>
    </location>
</feature>
<feature type="mutagenesis site" description="Decreased but not abolished proton-induced G-protein coupled receptor signaling. Failed to stimulate IP formation at pH 6.8, activity is restored at more acid pH." evidence="5 13">
    <original>H</original>
    <variation>F</variation>
    <location>
        <position position="269"/>
    </location>
</feature>
<feature type="mutagenesis site" description="Decreased proton-induced G-protein coupled receptor signaling." evidence="17">
    <original>D</original>
    <variation>A</variation>
    <location>
        <position position="282"/>
    </location>
</feature>
<feature type="mutagenesis site" description="Impaired ability to sense protons." evidence="14">
    <original>D</original>
    <variation>N</variation>
    <location>
        <position position="282"/>
    </location>
</feature>
<feature type="sequence conflict" description="In Ref. 1; AAA79060." evidence="22" ref="1">
    <original>GVS</original>
    <variation>RVT</variation>
    <location>
        <begin position="140"/>
        <end position="142"/>
    </location>
</feature>
<organism>
    <name type="scientific">Homo sapiens</name>
    <name type="common">Human</name>
    <dbReference type="NCBI Taxonomy" id="9606"/>
    <lineage>
        <taxon>Eukaryota</taxon>
        <taxon>Metazoa</taxon>
        <taxon>Chordata</taxon>
        <taxon>Craniata</taxon>
        <taxon>Vertebrata</taxon>
        <taxon>Euteleostomi</taxon>
        <taxon>Mammalia</taxon>
        <taxon>Eutheria</taxon>
        <taxon>Euarchontoglires</taxon>
        <taxon>Primates</taxon>
        <taxon>Haplorrhini</taxon>
        <taxon>Catarrhini</taxon>
        <taxon>Hominidae</taxon>
        <taxon>Homo</taxon>
    </lineage>
</organism>
<gene>
    <name evidence="19 25" type="primary">GPR68</name>
    <name evidence="21" type="synonym">OGR1</name>
</gene>
<protein>
    <recommendedName>
        <fullName evidence="19">G-protein coupled receptor 68</fullName>
    </recommendedName>
    <alternativeName>
        <fullName evidence="20">G-protein coupled receptor 12A</fullName>
        <shortName evidence="20">GPR12A</shortName>
    </alternativeName>
    <alternativeName>
        <fullName evidence="21">Ovarian cancer G-protein coupled receptor 1</fullName>
        <shortName evidence="21">OGR-1</shortName>
    </alternativeName>
</protein>
<sequence length="365" mass="41077">MGNITADNSSMSCTIDHTIHQTLAPVVYVTVLVVGFPANCLSLYFGYLQIKARNELGVYLCNLTVADLFYICSLPFWLQYVLQHDNWSHGDLSCQVCGILLYENIYISVGFLCCISVDRYLAVAHPFRFHQFRTLKAAVGVSVVIWAKELLTSIYFLMHEEVIEDENQHRVCFEHYPIQAWQRAINYYRFLVGFLFPICLLLASYQGILRAVRRSHGTQKSRKDQIQRLVLSTVVIFLACFLPYHVLLLVRSVWEASCDFAKGVFNAYHFSLLLTSFNCVADPVLYCFVSETTHRDLARLRGACLAFLTCSRTGRAREAYPLGAPEASGKSGAQGEEPELLTKLHPAFQTPNSPGSGGFPTGRLA</sequence>